<organism>
    <name type="scientific">Synechococcus sp. (strain CC9605)</name>
    <dbReference type="NCBI Taxonomy" id="110662"/>
    <lineage>
        <taxon>Bacteria</taxon>
        <taxon>Bacillati</taxon>
        <taxon>Cyanobacteriota</taxon>
        <taxon>Cyanophyceae</taxon>
        <taxon>Synechococcales</taxon>
        <taxon>Synechococcaceae</taxon>
        <taxon>Synechococcus</taxon>
    </lineage>
</organism>
<comment type="function">
    <text evidence="1">Bidirectionally degrades single-stranded DNA into large acid-insoluble oligonucleotides, which are then degraded further into small acid-soluble oligonucleotides.</text>
</comment>
<comment type="catalytic activity">
    <reaction evidence="1">
        <text>Exonucleolytic cleavage in either 5'- to 3'- or 3'- to 5'-direction to yield nucleoside 5'-phosphates.</text>
        <dbReference type="EC" id="3.1.11.6"/>
    </reaction>
</comment>
<comment type="subunit">
    <text evidence="1">Heterooligomer composed of large and small subunits.</text>
</comment>
<comment type="subcellular location">
    <subcellularLocation>
        <location evidence="1">Cytoplasm</location>
    </subcellularLocation>
</comment>
<comment type="similarity">
    <text evidence="1">Belongs to the XseA family.</text>
</comment>
<comment type="sequence caution" evidence="2">
    <conflict type="erroneous initiation">
        <sequence resource="EMBL-CDS" id="ABB36056"/>
    </conflict>
</comment>
<evidence type="ECO:0000255" key="1">
    <source>
        <dbReference type="HAMAP-Rule" id="MF_00378"/>
    </source>
</evidence>
<evidence type="ECO:0000305" key="2"/>
<accession>Q3AH76</accession>
<keyword id="KW-0963">Cytoplasm</keyword>
<keyword id="KW-0269">Exonuclease</keyword>
<keyword id="KW-0378">Hydrolase</keyword>
<keyword id="KW-0540">Nuclease</keyword>
<protein>
    <recommendedName>
        <fullName evidence="1">Exodeoxyribonuclease 7 large subunit</fullName>
        <ecNumber evidence="1">3.1.11.6</ecNumber>
    </recommendedName>
    <alternativeName>
        <fullName evidence="1">Exodeoxyribonuclease VII large subunit</fullName>
        <shortName evidence="1">Exonuclease VII large subunit</shortName>
    </alternativeName>
</protein>
<feature type="chain" id="PRO_0000303829" description="Exodeoxyribonuclease 7 large subunit">
    <location>
        <begin position="1"/>
        <end position="387"/>
    </location>
</feature>
<reference key="1">
    <citation type="submission" date="2005-07" db="EMBL/GenBank/DDBJ databases">
        <title>Complete sequence of Synechococcus sp. CC9605.</title>
        <authorList>
            <consortium name="US DOE Joint Genome Institute"/>
            <person name="Copeland A."/>
            <person name="Lucas S."/>
            <person name="Lapidus A."/>
            <person name="Barry K."/>
            <person name="Detter J.C."/>
            <person name="Glavina T."/>
            <person name="Hammon N."/>
            <person name="Israni S."/>
            <person name="Pitluck S."/>
            <person name="Schmutz J."/>
            <person name="Martinez M."/>
            <person name="Larimer F."/>
            <person name="Land M."/>
            <person name="Kyrpides N."/>
            <person name="Ivanova N."/>
            <person name="Richardson P."/>
        </authorList>
    </citation>
    <scope>NUCLEOTIDE SEQUENCE [LARGE SCALE GENOMIC DNA]</scope>
    <source>
        <strain>CC9605</strain>
    </source>
</reference>
<proteinExistence type="inferred from homology"/>
<dbReference type="EC" id="3.1.11.6" evidence="1"/>
<dbReference type="EMBL" id="CP000110">
    <property type="protein sequence ID" value="ABB36056.1"/>
    <property type="status" value="ALT_INIT"/>
    <property type="molecule type" value="Genomic_DNA"/>
</dbReference>
<dbReference type="RefSeq" id="WP_041435211.1">
    <property type="nucleotide sequence ID" value="NC_007516.1"/>
</dbReference>
<dbReference type="SMR" id="Q3AH76"/>
<dbReference type="STRING" id="110662.Syncc9605_2324"/>
<dbReference type="KEGG" id="syd:Syncc9605_2324"/>
<dbReference type="eggNOG" id="COG1570">
    <property type="taxonomic scope" value="Bacteria"/>
</dbReference>
<dbReference type="HOGENOM" id="CLU_023625_2_1_3"/>
<dbReference type="OrthoDB" id="9802795at2"/>
<dbReference type="GO" id="GO:0005737">
    <property type="term" value="C:cytoplasm"/>
    <property type="evidence" value="ECO:0007669"/>
    <property type="project" value="UniProtKB-SubCell"/>
</dbReference>
<dbReference type="GO" id="GO:0009318">
    <property type="term" value="C:exodeoxyribonuclease VII complex"/>
    <property type="evidence" value="ECO:0007669"/>
    <property type="project" value="InterPro"/>
</dbReference>
<dbReference type="GO" id="GO:0008855">
    <property type="term" value="F:exodeoxyribonuclease VII activity"/>
    <property type="evidence" value="ECO:0007669"/>
    <property type="project" value="UniProtKB-UniRule"/>
</dbReference>
<dbReference type="GO" id="GO:0003676">
    <property type="term" value="F:nucleic acid binding"/>
    <property type="evidence" value="ECO:0007669"/>
    <property type="project" value="InterPro"/>
</dbReference>
<dbReference type="GO" id="GO:0006308">
    <property type="term" value="P:DNA catabolic process"/>
    <property type="evidence" value="ECO:0007669"/>
    <property type="project" value="UniProtKB-UniRule"/>
</dbReference>
<dbReference type="CDD" id="cd04489">
    <property type="entry name" value="ExoVII_LU_OBF"/>
    <property type="match status" value="1"/>
</dbReference>
<dbReference type="HAMAP" id="MF_00378">
    <property type="entry name" value="Exonuc_7_L"/>
    <property type="match status" value="1"/>
</dbReference>
<dbReference type="InterPro" id="IPR003753">
    <property type="entry name" value="Exonuc_VII_L"/>
</dbReference>
<dbReference type="InterPro" id="IPR020579">
    <property type="entry name" value="Exonuc_VII_lsu_C"/>
</dbReference>
<dbReference type="InterPro" id="IPR025824">
    <property type="entry name" value="OB-fold_nuc-bd_dom"/>
</dbReference>
<dbReference type="NCBIfam" id="TIGR00237">
    <property type="entry name" value="xseA"/>
    <property type="match status" value="1"/>
</dbReference>
<dbReference type="PANTHER" id="PTHR30008">
    <property type="entry name" value="EXODEOXYRIBONUCLEASE 7 LARGE SUBUNIT"/>
    <property type="match status" value="1"/>
</dbReference>
<dbReference type="PANTHER" id="PTHR30008:SF0">
    <property type="entry name" value="EXODEOXYRIBONUCLEASE 7 LARGE SUBUNIT"/>
    <property type="match status" value="1"/>
</dbReference>
<dbReference type="Pfam" id="PF02601">
    <property type="entry name" value="Exonuc_VII_L"/>
    <property type="match status" value="2"/>
</dbReference>
<dbReference type="Pfam" id="PF13742">
    <property type="entry name" value="tRNA_anti_2"/>
    <property type="match status" value="1"/>
</dbReference>
<name>EX7L_SYNSC</name>
<gene>
    <name evidence="1" type="primary">xseA</name>
    <name type="ordered locus">Syncc9605_2324</name>
</gene>
<sequence>MSADRLPSYSVAELNTAIGSLLERGFAPRFLLEATVSRPQLKKGHLWLTLTDGSASISGVVWASKLAQLSYQPKDGDGVTVVGKLNFWAARASLTVQALDIRPSLSTVLRDFERVRQVLEQEGVIDPSRLRPLPSQPASIAVLTSVPSSALADMLRTAAERWPLTQLIVVPIPVQGSVAPTIINTLEAIAERTAELGLQALVLARGGGSREDLAVFDNEALCRLLANYPIPVVTGLGHEDDLTVADLVADHRAATPTAAIVALLPDREAERQGLTQRQSRLKDTLLGRILRERQRLQDRAVALQQQSPREKIMRKRQELIQKHQLLKALSPERWLKRGLALISNKAGDPIPGLESVKIGDQLNIRMSDGSLEARVDQIQPSAPNTTS</sequence>